<gene>
    <name type="primary">rgpA</name>
    <name type="synonym">rgp1</name>
</gene>
<reference key="1">
    <citation type="journal article" date="1995" name="Arch. Biochem. Biophys.">
        <title>Structural characterization of argingipain, a novel arginine-specific cysteine proteinase as a major periodontal pathogenic factor from Porphyromonas gingivalis.</title>
        <authorList>
            <person name="Okamoto K."/>
            <person name="Misumi Y."/>
            <person name="Kadowaki T."/>
            <person name="Yoneda M."/>
            <person name="Yamamoto K."/>
            <person name="Ikehara Y."/>
        </authorList>
    </citation>
    <scope>NUCLEOTIDE SEQUENCE [GENOMIC DNA]</scope>
    <scope>PROTEIN SEQUENCE OF 228-290 AND 517-541</scope>
    <scope>SUBCELLULAR LOCATION</scope>
    <source>
        <strain>ATCC BAA-1703 / FDC 381</strain>
    </source>
</reference>
<reference key="2">
    <citation type="journal article" date="1992" name="J. Biol. Chem.">
        <title>Purification and characterization of a 50-kDa cysteine proteinase (gingipain) from Porphyromonas gingivalis.</title>
        <authorList>
            <person name="Chen Z."/>
            <person name="Potempa J."/>
            <person name="Polanowski A."/>
            <person name="Wikstrom M."/>
            <person name="Travis J."/>
        </authorList>
    </citation>
    <scope>PROTEIN SEQUENCE OF 228-270</scope>
    <scope>SUBCELLULAR LOCATION</scope>
    <scope>CATALYTIC ACTIVITY</scope>
    <scope>ACTIVITY REGULATION</scope>
    <source>
        <strain>HG66</strain>
    </source>
</reference>
<protein>
    <recommendedName>
        <fullName>Gingipain R1</fullName>
        <ecNumber evidence="5">3.4.22.37</ecNumber>
    </recommendedName>
    <alternativeName>
        <fullName>Arg-gingipain</fullName>
    </alternativeName>
    <alternativeName>
        <fullName>Gingipain 1</fullName>
    </alternativeName>
    <alternativeName>
        <fullName>RGP-1</fullName>
    </alternativeName>
</protein>
<evidence type="ECO:0000250" key="1"/>
<evidence type="ECO:0000250" key="2">
    <source>
        <dbReference type="UniProtKB" id="B2RKU0"/>
    </source>
</evidence>
<evidence type="ECO:0000250" key="3">
    <source>
        <dbReference type="UniProtKB" id="P95493"/>
    </source>
</evidence>
<evidence type="ECO:0000255" key="4"/>
<evidence type="ECO:0000269" key="5">
    <source>
    </source>
</evidence>
<evidence type="ECO:0000269" key="6">
    <source>
    </source>
</evidence>
<evidence type="ECO:0000305" key="7"/>
<name>CPG1_PORGN</name>
<organism>
    <name type="scientific">Porphyromonas gingivalis</name>
    <name type="common">Bacteroides gingivalis</name>
    <dbReference type="NCBI Taxonomy" id="837"/>
    <lineage>
        <taxon>Bacteria</taxon>
        <taxon>Pseudomonadati</taxon>
        <taxon>Bacteroidota</taxon>
        <taxon>Bacteroidia</taxon>
        <taxon>Bacteroidales</taxon>
        <taxon>Porphyromonadaceae</taxon>
        <taxon>Porphyromonas</taxon>
    </lineage>
</organism>
<keyword id="KW-0106">Calcium</keyword>
<keyword id="KW-0903">Direct protein sequencing</keyword>
<keyword id="KW-0378">Hydrolase</keyword>
<keyword id="KW-0479">Metal-binding</keyword>
<keyword id="KW-0645">Protease</keyword>
<keyword id="KW-0964">Secreted</keyword>
<keyword id="KW-0732">Signal</keyword>
<keyword id="KW-0788">Thiol protease</keyword>
<keyword id="KW-0843">Virulence</keyword>
<keyword id="KW-0865">Zymogen</keyword>
<sequence length="991" mass="108782">MKNLNKFVSIALCSSLLGGMAFAQQTELGRNPNVRLLESTQQSVTKVQFRMDNLKFTEVQTPKGMAQVPTYTEGVNLSEKGMPTLPILSRSLAVSDTREMKVEVVSSKFIEKKNVLIAPSKGMIMRNEDPKKIPYVYGKSYSQNKFFPGEIATLDDPFILRDVRGQVVNFAPLQYNPVTKTLRIYTEITVAVSETSEQGKNILNKKGTFAGFEDTYKRMFMNYEPGRYTPVEEKQNGRMIVIVAKKYEGDIKDFVDWKNQRGLRTEVKVAEDIASPVTANAIQQFVKQEYEKEGNDLTYVLLVGDHKDIPAKITPGIKSDQVYGQIVGNDHYNEVFIGRFSCESKEDLKTQIDRTIHYERNITTEDKWLGQALCIASAEGGPSADNGESDIQHENVIANLLTQYGYTKIIKCYDPGVTPKNIIDAFNGGISLVNYTGHGSETAWGTSHFGTTHVKQLTNSNQLPFIFDVACVNGDFLFSMPCFAEALMRAQKDGKPTGTVAIIASTINQSWASPMRGQDEMNEILCEKHPNNIKRTFGGVTMNGMFAMVEKYKKDGEKMLDTWTVFGDPSLLVRTLVPTKMQVTAPAQINLTDASVNVSCDYNGAIATISANGKMFGSAVVENGTATINLTGLTNESTLTLTVVGYNKETVIKTINTNGEPNPYQPVSNLTATTQGQKVTLKWDAPSTKTNATTNTARSVDGIRELVLLSVSDAPELLRSGQAEIVLEAHDVWNDGSGYQILLDADHDQYGQVIPSDTHTLWPNCSVPANLFAPFEYTVPENADPSCSPTNMIMDGTASVNIPAGTYDFAIAAPQANAKIWIAGQGPTKEDDYVFEAGKKYHFLMKKMGSGDGTELTISEGGGSDYTYTVYRDGTKIKEGLTETTYRDAGMSAQSHEYCVEVKYAAGVSPKVCVDYIPDGVADVTAQKPYTLTVVGKTITVTCQGEAMIYDMNGRRLAAGRNTVVYTAQGGYYAVMVVVDGKSYVEKLAVK</sequence>
<dbReference type="EC" id="3.4.22.37" evidence="5"/>
<dbReference type="EMBL" id="D26470">
    <property type="protein sequence ID" value="BAA05484.1"/>
    <property type="molecule type" value="Genomic_DNA"/>
</dbReference>
<dbReference type="PIR" id="I40229">
    <property type="entry name" value="I40229"/>
</dbReference>
<dbReference type="SMR" id="P28784"/>
<dbReference type="MEROPS" id="C25.001"/>
<dbReference type="BRENDA" id="3.4.22.37">
    <property type="organism ID" value="756"/>
</dbReference>
<dbReference type="GO" id="GO:0005576">
    <property type="term" value="C:extracellular region"/>
    <property type="evidence" value="ECO:0000314"/>
    <property type="project" value="UniProtKB"/>
</dbReference>
<dbReference type="GO" id="GO:0005509">
    <property type="term" value="F:calcium ion binding"/>
    <property type="evidence" value="ECO:0000314"/>
    <property type="project" value="UniProtKB"/>
</dbReference>
<dbReference type="GO" id="GO:0004198">
    <property type="term" value="F:calcium-dependent cysteine-type endopeptidase activity"/>
    <property type="evidence" value="ECO:0000314"/>
    <property type="project" value="UniProtKB"/>
</dbReference>
<dbReference type="GO" id="GO:0006508">
    <property type="term" value="P:proteolysis"/>
    <property type="evidence" value="ECO:0000314"/>
    <property type="project" value="UniProtKB"/>
</dbReference>
<dbReference type="CDD" id="cd10913">
    <property type="entry name" value="Peptidase_C25_N_gingipain"/>
    <property type="match status" value="1"/>
</dbReference>
<dbReference type="FunFam" id="2.60.40.3800:FF:000001">
    <property type="entry name" value="Gingipain R2"/>
    <property type="match status" value="1"/>
</dbReference>
<dbReference type="FunFam" id="3.40.50.1460:FF:000031">
    <property type="entry name" value="Gingipain R2"/>
    <property type="match status" value="1"/>
</dbReference>
<dbReference type="Gene3D" id="2.60.40.3800">
    <property type="match status" value="1"/>
</dbReference>
<dbReference type="Gene3D" id="3.40.50.1460">
    <property type="match status" value="1"/>
</dbReference>
<dbReference type="Gene3D" id="3.40.50.10390">
    <property type="entry name" value="Gingipain r, domain 1"/>
    <property type="match status" value="1"/>
</dbReference>
<dbReference type="Gene3D" id="2.60.40.10">
    <property type="entry name" value="Immunoglobulins"/>
    <property type="match status" value="2"/>
</dbReference>
<dbReference type="InterPro" id="IPR029030">
    <property type="entry name" value="Caspase-like_dom_sf"/>
</dbReference>
<dbReference type="InterPro" id="IPR001769">
    <property type="entry name" value="Gingipain"/>
</dbReference>
<dbReference type="InterPro" id="IPR039392">
    <property type="entry name" value="Gingipain_N"/>
</dbReference>
<dbReference type="InterPro" id="IPR029031">
    <property type="entry name" value="Gingipain_N_sf"/>
</dbReference>
<dbReference type="InterPro" id="IPR038490">
    <property type="entry name" value="Gingipain_propep_sf"/>
</dbReference>
<dbReference type="InterPro" id="IPR013783">
    <property type="entry name" value="Ig-like_fold"/>
</dbReference>
<dbReference type="InterPro" id="IPR014756">
    <property type="entry name" value="Ig_E-set"/>
</dbReference>
<dbReference type="InterPro" id="IPR018832">
    <property type="entry name" value="Pept_C25_gingipain_C"/>
</dbReference>
<dbReference type="InterPro" id="IPR005536">
    <property type="entry name" value="Peptidase_C25_Ig-like_domain"/>
</dbReference>
<dbReference type="InterPro" id="IPR012600">
    <property type="entry name" value="Propeptide_C25"/>
</dbReference>
<dbReference type="Pfam" id="PF10365">
    <property type="entry name" value="DUF2436"/>
    <property type="match status" value="1"/>
</dbReference>
<dbReference type="Pfam" id="PF01364">
    <property type="entry name" value="Peptidase_C25"/>
    <property type="match status" value="1"/>
</dbReference>
<dbReference type="Pfam" id="PF03785">
    <property type="entry name" value="Peptidase_C25_C"/>
    <property type="match status" value="1"/>
</dbReference>
<dbReference type="Pfam" id="PF08126">
    <property type="entry name" value="Propeptide_C25"/>
    <property type="match status" value="1"/>
</dbReference>
<dbReference type="SUPFAM" id="SSF52129">
    <property type="entry name" value="Caspase-like"/>
    <property type="match status" value="1"/>
</dbReference>
<dbReference type="SUPFAM" id="SSF81296">
    <property type="entry name" value="E set domains"/>
    <property type="match status" value="1"/>
</dbReference>
<comment type="function">
    <text evidence="2 7">Thiol protease. Acts synergistically with RgpB to catalyze the maturation of fimbrial subunits, such as FimA (By similarity). Its proteolytic activity is a major factor in both periodontal tissue destruction and in evasion of host defense mechanisms (Probable).</text>
</comment>
<comment type="catalytic activity">
    <reaction evidence="5">
        <text>Hydrolysis of proteins and small molecule substrates, with a preference for Arg in P1.</text>
        <dbReference type="EC" id="3.4.22.37"/>
    </reaction>
</comment>
<comment type="activity regulation">
    <text evidence="5">Requires cysteine for activation and Ca(2+) and/or Mg(2+) for stabilization. It is stimulated by glycine-containing dipeptides. It is resistant to inhibition by proteinase inhibitors in human plasma.</text>
</comment>
<comment type="subcellular location">
    <subcellularLocation>
        <location evidence="5 6">Secreted</location>
    </subcellularLocation>
</comment>
<comment type="similarity">
    <text evidence="7">Belongs to the peptidase C25 family.</text>
</comment>
<feature type="signal peptide" evidence="4">
    <location>
        <begin position="1"/>
        <end position="24"/>
    </location>
</feature>
<feature type="propeptide" id="PRO_0000026533" evidence="5 6">
    <location>
        <begin position="25"/>
        <end position="227"/>
    </location>
</feature>
<feature type="chain" id="PRO_0000026534" description="Gingipain R1">
    <location>
        <begin position="228"/>
        <end position="991"/>
    </location>
</feature>
<feature type="active site" description="Proton donor" evidence="1">
    <location>
        <position position="438"/>
    </location>
</feature>
<feature type="active site" description="Nucleophile" evidence="3">
    <location>
        <position position="471"/>
    </location>
</feature>
<feature type="binding site" evidence="3">
    <location>
        <position position="305"/>
    </location>
    <ligand>
        <name>Ca(2+)</name>
        <dbReference type="ChEBI" id="CHEBI:29108"/>
        <label>1</label>
    </ligand>
</feature>
<feature type="binding site" evidence="3">
    <location>
        <position position="327"/>
    </location>
    <ligand>
        <name>Ca(2+)</name>
        <dbReference type="ChEBI" id="CHEBI:29108"/>
        <label>2</label>
    </ligand>
</feature>
<feature type="binding site" evidence="3">
    <location>
        <position position="330"/>
    </location>
    <ligand>
        <name>Ca(2+)</name>
        <dbReference type="ChEBI" id="CHEBI:29108"/>
        <label>2</label>
    </ligand>
</feature>
<feature type="binding site" evidence="3">
    <location>
        <position position="332"/>
    </location>
    <ligand>
        <name>Ca(2+)</name>
        <dbReference type="ChEBI" id="CHEBI:29108"/>
        <label>2</label>
    </ligand>
</feature>
<feature type="binding site" evidence="3">
    <location>
        <position position="334"/>
    </location>
    <ligand>
        <name>Ca(2+)</name>
        <dbReference type="ChEBI" id="CHEBI:29108"/>
        <label>2</label>
    </ligand>
</feature>
<feature type="binding site" evidence="3">
    <location>
        <position position="388"/>
    </location>
    <ligand>
        <name>Ca(2+)</name>
        <dbReference type="ChEBI" id="CHEBI:29108"/>
        <label>3</label>
    </ligand>
</feature>
<feature type="binding site" evidence="3">
    <location>
        <position position="393"/>
    </location>
    <ligand>
        <name>Ca(2+)</name>
        <dbReference type="ChEBI" id="CHEBI:29108"/>
        <label>3</label>
    </ligand>
</feature>
<feature type="binding site" evidence="3">
    <location>
        <position position="476"/>
    </location>
    <ligand>
        <name>Ca(2+)</name>
        <dbReference type="ChEBI" id="CHEBI:29108"/>
        <label>1</label>
    </ligand>
</feature>
<feature type="binding site" evidence="3">
    <location>
        <position position="485"/>
    </location>
    <ligand>
        <name>Ca(2+)</name>
        <dbReference type="ChEBI" id="CHEBI:29108"/>
        <label>1</label>
    </ligand>
</feature>
<feature type="binding site" evidence="3">
    <location>
        <position position="519"/>
    </location>
    <ligand>
        <name>Ca(2+)</name>
        <dbReference type="ChEBI" id="CHEBI:29108"/>
        <label>3</label>
    </ligand>
</feature>
<feature type="binding site" evidence="3">
    <location>
        <position position="520"/>
    </location>
    <ligand>
        <name>Ca(2+)</name>
        <dbReference type="ChEBI" id="CHEBI:29108"/>
        <label>4</label>
    </ligand>
</feature>
<feature type="binding site" evidence="3">
    <location>
        <position position="523"/>
    </location>
    <ligand>
        <name>Ca(2+)</name>
        <dbReference type="ChEBI" id="CHEBI:29108"/>
        <label>4</label>
    </ligand>
</feature>
<feature type="binding site" evidence="3">
    <location>
        <position position="529"/>
    </location>
    <ligand>
        <name>Ca(2+)</name>
        <dbReference type="ChEBI" id="CHEBI:29108"/>
        <label>4</label>
    </ligand>
</feature>
<feature type="sequence conflict" description="In Ref. 2; AA sequence." evidence="7" ref="2">
    <original>RT</original>
    <variation>TK</variation>
    <location>
        <begin position="264"/>
        <end position="265"/>
    </location>
</feature>
<proteinExistence type="evidence at protein level"/>
<accession>P28784</accession>
<accession>Q45168</accession>